<keyword id="KW-0369">Histidine metabolism</keyword>
<keyword id="KW-0378">Hydrolase</keyword>
<keyword id="KW-0464">Manganese</keyword>
<keyword id="KW-0479">Metal-binding</keyword>
<proteinExistence type="inferred from homology"/>
<organism>
    <name type="scientific">Pseudomonas aeruginosa (strain UCBPP-PA14)</name>
    <dbReference type="NCBI Taxonomy" id="208963"/>
    <lineage>
        <taxon>Bacteria</taxon>
        <taxon>Pseudomonadati</taxon>
        <taxon>Pseudomonadota</taxon>
        <taxon>Gammaproteobacteria</taxon>
        <taxon>Pseudomonadales</taxon>
        <taxon>Pseudomonadaceae</taxon>
        <taxon>Pseudomonas</taxon>
    </lineage>
</organism>
<comment type="function">
    <text evidence="1">Catalyzes the conversion of N-formimidoyl-L-glutamate to L-glutamate and formamide.</text>
</comment>
<comment type="catalytic activity">
    <reaction evidence="1">
        <text>N-formimidoyl-L-glutamate + H2O = formamide + L-glutamate</text>
        <dbReference type="Rhea" id="RHEA:22492"/>
        <dbReference type="ChEBI" id="CHEBI:15377"/>
        <dbReference type="ChEBI" id="CHEBI:16397"/>
        <dbReference type="ChEBI" id="CHEBI:29985"/>
        <dbReference type="ChEBI" id="CHEBI:58928"/>
        <dbReference type="EC" id="3.5.3.8"/>
    </reaction>
</comment>
<comment type="cofactor">
    <cofactor evidence="1">
        <name>Mn(2+)</name>
        <dbReference type="ChEBI" id="CHEBI:29035"/>
    </cofactor>
    <text evidence="1">Binds 2 manganese ions per subunit.</text>
</comment>
<comment type="pathway">
    <text evidence="1">Amino-acid degradation; L-histidine degradation into L-glutamate; L-glutamate from N-formimidoyl-L-glutamate (hydrolase route): step 1/1.</text>
</comment>
<comment type="similarity">
    <text evidence="1">Belongs to the arginase family.</text>
</comment>
<gene>
    <name type="ordered locus">PA14_23170</name>
</gene>
<feature type="chain" id="PRO_1000046301" description="Formimidoylglutamase">
    <location>
        <begin position="1"/>
        <end position="311"/>
    </location>
</feature>
<feature type="binding site" evidence="1">
    <location>
        <position position="122"/>
    </location>
    <ligand>
        <name>Mn(2+)</name>
        <dbReference type="ChEBI" id="CHEBI:29035"/>
        <label>1</label>
    </ligand>
</feature>
<feature type="binding site" evidence="1">
    <location>
        <position position="151"/>
    </location>
    <ligand>
        <name>Mn(2+)</name>
        <dbReference type="ChEBI" id="CHEBI:29035"/>
        <label>1</label>
    </ligand>
</feature>
<feature type="binding site" evidence="1">
    <location>
        <position position="151"/>
    </location>
    <ligand>
        <name>Mn(2+)</name>
        <dbReference type="ChEBI" id="CHEBI:29035"/>
        <label>2</label>
    </ligand>
</feature>
<feature type="binding site" evidence="1">
    <location>
        <position position="153"/>
    </location>
    <ligand>
        <name>Mn(2+)</name>
        <dbReference type="ChEBI" id="CHEBI:29035"/>
        <label>2</label>
    </ligand>
</feature>
<feature type="binding site" evidence="1">
    <location>
        <position position="155"/>
    </location>
    <ligand>
        <name>Mn(2+)</name>
        <dbReference type="ChEBI" id="CHEBI:29035"/>
        <label>1</label>
    </ligand>
</feature>
<feature type="binding site" evidence="1">
    <location>
        <position position="242"/>
    </location>
    <ligand>
        <name>Mn(2+)</name>
        <dbReference type="ChEBI" id="CHEBI:29035"/>
        <label>1</label>
    </ligand>
</feature>
<feature type="binding site" evidence="1">
    <location>
        <position position="242"/>
    </location>
    <ligand>
        <name>Mn(2+)</name>
        <dbReference type="ChEBI" id="CHEBI:29035"/>
        <label>2</label>
    </ligand>
</feature>
<feature type="binding site" evidence="1">
    <location>
        <position position="244"/>
    </location>
    <ligand>
        <name>Mn(2+)</name>
        <dbReference type="ChEBI" id="CHEBI:29035"/>
        <label>2</label>
    </ligand>
</feature>
<name>HUTGL_PSEAB</name>
<sequence>MYPAPDMSLWQGRIDSQEGADARRWHQWMRPYADDAEAASVLLGFASDEGVRRNQGRQGARHGPPALRRALANLAWHGEQAIYDAGDIVAGDDLEAAQECYAQRVADLLARGHRVVGLGGGHEIAYASFAGLARHLSRHERLPRIGILNFDAHFDLRHAERASSGTPFRQIAELCQASDWPFAYCCLGISRLSNTAALFDQAQRLGVRYLLDRQLQPWNLERSEAFLDSFLQSVDHLYLTVCLDVLPAAQAPGVSAPSAHGVEMSVVEHLVRRAKASGKLRLADIAELNPQLDSDQRTARIAARLVDSLVN</sequence>
<evidence type="ECO:0000255" key="1">
    <source>
        <dbReference type="HAMAP-Rule" id="MF_00737"/>
    </source>
</evidence>
<accession>Q02PY1</accession>
<protein>
    <recommendedName>
        <fullName evidence="1">Formimidoylglutamase</fullName>
        <ecNumber evidence="1">3.5.3.8</ecNumber>
    </recommendedName>
    <alternativeName>
        <fullName evidence="1">Formiminoglutamase</fullName>
    </alternativeName>
    <alternativeName>
        <fullName evidence="1">Formiminoglutamate hydrolase</fullName>
    </alternativeName>
</protein>
<reference key="1">
    <citation type="journal article" date="2006" name="Genome Biol.">
        <title>Genomic analysis reveals that Pseudomonas aeruginosa virulence is combinatorial.</title>
        <authorList>
            <person name="Lee D.G."/>
            <person name="Urbach J.M."/>
            <person name="Wu G."/>
            <person name="Liberati N.T."/>
            <person name="Feinbaum R.L."/>
            <person name="Miyata S."/>
            <person name="Diggins L.T."/>
            <person name="He J."/>
            <person name="Saucier M."/>
            <person name="Deziel E."/>
            <person name="Friedman L."/>
            <person name="Li L."/>
            <person name="Grills G."/>
            <person name="Montgomery K."/>
            <person name="Kucherlapati R."/>
            <person name="Rahme L.G."/>
            <person name="Ausubel F.M."/>
        </authorList>
    </citation>
    <scope>NUCLEOTIDE SEQUENCE [LARGE SCALE GENOMIC DNA]</scope>
    <source>
        <strain>UCBPP-PA14</strain>
    </source>
</reference>
<dbReference type="EC" id="3.5.3.8" evidence="1"/>
<dbReference type="EMBL" id="CP000438">
    <property type="protein sequence ID" value="ABJ12400.1"/>
    <property type="molecule type" value="Genomic_DNA"/>
</dbReference>
<dbReference type="SMR" id="Q02PY1"/>
<dbReference type="KEGG" id="pau:PA14_23170"/>
<dbReference type="PseudoCAP" id="PA14_23170"/>
<dbReference type="HOGENOM" id="CLU_039478_2_0_6"/>
<dbReference type="BioCyc" id="PAER208963:G1G74-1929-MONOMER"/>
<dbReference type="UniPathway" id="UPA00379">
    <property type="reaction ID" value="UER00552"/>
</dbReference>
<dbReference type="Proteomes" id="UP000000653">
    <property type="component" value="Chromosome"/>
</dbReference>
<dbReference type="GO" id="GO:0008783">
    <property type="term" value="F:agmatinase activity"/>
    <property type="evidence" value="ECO:0007669"/>
    <property type="project" value="TreeGrafter"/>
</dbReference>
<dbReference type="GO" id="GO:0050415">
    <property type="term" value="F:formimidoylglutamase activity"/>
    <property type="evidence" value="ECO:0007669"/>
    <property type="project" value="UniProtKB-UniRule"/>
</dbReference>
<dbReference type="GO" id="GO:0030145">
    <property type="term" value="F:manganese ion binding"/>
    <property type="evidence" value="ECO:0007669"/>
    <property type="project" value="UniProtKB-UniRule"/>
</dbReference>
<dbReference type="GO" id="GO:0019556">
    <property type="term" value="P:L-histidine catabolic process to glutamate and formamide"/>
    <property type="evidence" value="ECO:0007669"/>
    <property type="project" value="UniProtKB-UniPathway"/>
</dbReference>
<dbReference type="GO" id="GO:0019557">
    <property type="term" value="P:L-histidine catabolic process to glutamate and formate"/>
    <property type="evidence" value="ECO:0007669"/>
    <property type="project" value="UniProtKB-UniPathway"/>
</dbReference>
<dbReference type="GO" id="GO:0033389">
    <property type="term" value="P:putrescine biosynthetic process from arginine, via agmatine"/>
    <property type="evidence" value="ECO:0007669"/>
    <property type="project" value="TreeGrafter"/>
</dbReference>
<dbReference type="CDD" id="cd09988">
    <property type="entry name" value="Formimidoylglutamase"/>
    <property type="match status" value="1"/>
</dbReference>
<dbReference type="FunFam" id="3.40.800.10:FF:000010">
    <property type="entry name" value="Formimidoylglutamase"/>
    <property type="match status" value="1"/>
</dbReference>
<dbReference type="Gene3D" id="3.40.800.10">
    <property type="entry name" value="Ureohydrolase domain"/>
    <property type="match status" value="1"/>
</dbReference>
<dbReference type="HAMAP" id="MF_00737">
    <property type="entry name" value="Formimidoylglutam"/>
    <property type="match status" value="1"/>
</dbReference>
<dbReference type="InterPro" id="IPR005923">
    <property type="entry name" value="HutG"/>
</dbReference>
<dbReference type="InterPro" id="IPR006035">
    <property type="entry name" value="Ureohydrolase"/>
</dbReference>
<dbReference type="InterPro" id="IPR023696">
    <property type="entry name" value="Ureohydrolase_dom_sf"/>
</dbReference>
<dbReference type="NCBIfam" id="TIGR01227">
    <property type="entry name" value="hutG"/>
    <property type="match status" value="1"/>
</dbReference>
<dbReference type="PANTHER" id="PTHR11358">
    <property type="entry name" value="ARGINASE/AGMATINASE"/>
    <property type="match status" value="1"/>
</dbReference>
<dbReference type="PANTHER" id="PTHR11358:SF35">
    <property type="entry name" value="FORMIMIDOYLGLUTAMASE"/>
    <property type="match status" value="1"/>
</dbReference>
<dbReference type="Pfam" id="PF00491">
    <property type="entry name" value="Arginase"/>
    <property type="match status" value="1"/>
</dbReference>
<dbReference type="PIRSF" id="PIRSF036979">
    <property type="entry name" value="Arginase"/>
    <property type="match status" value="1"/>
</dbReference>
<dbReference type="SUPFAM" id="SSF52768">
    <property type="entry name" value="Arginase/deacetylase"/>
    <property type="match status" value="1"/>
</dbReference>
<dbReference type="PROSITE" id="PS51409">
    <property type="entry name" value="ARGINASE_2"/>
    <property type="match status" value="1"/>
</dbReference>